<proteinExistence type="inferred from homology"/>
<reference key="1">
    <citation type="journal article" date="2001" name="Nature">
        <title>Complete genome sequence of Salmonella enterica serovar Typhimurium LT2.</title>
        <authorList>
            <person name="McClelland M."/>
            <person name="Sanderson K.E."/>
            <person name="Spieth J."/>
            <person name="Clifton S.W."/>
            <person name="Latreille P."/>
            <person name="Courtney L."/>
            <person name="Porwollik S."/>
            <person name="Ali J."/>
            <person name="Dante M."/>
            <person name="Du F."/>
            <person name="Hou S."/>
            <person name="Layman D."/>
            <person name="Leonard S."/>
            <person name="Nguyen C."/>
            <person name="Scott K."/>
            <person name="Holmes A."/>
            <person name="Grewal N."/>
            <person name="Mulvaney E."/>
            <person name="Ryan E."/>
            <person name="Sun H."/>
            <person name="Florea L."/>
            <person name="Miller W."/>
            <person name="Stoneking T."/>
            <person name="Nhan M."/>
            <person name="Waterston R."/>
            <person name="Wilson R.K."/>
        </authorList>
    </citation>
    <scope>NUCLEOTIDE SEQUENCE [LARGE SCALE GENOMIC DNA]</scope>
    <source>
        <strain>LT2 / SGSC1412 / ATCC 700720</strain>
    </source>
</reference>
<organism>
    <name type="scientific">Salmonella typhimurium (strain LT2 / SGSC1412 / ATCC 700720)</name>
    <dbReference type="NCBI Taxonomy" id="99287"/>
    <lineage>
        <taxon>Bacteria</taxon>
        <taxon>Pseudomonadati</taxon>
        <taxon>Pseudomonadota</taxon>
        <taxon>Gammaproteobacteria</taxon>
        <taxon>Enterobacterales</taxon>
        <taxon>Enterobacteriaceae</taxon>
        <taxon>Salmonella</taxon>
    </lineage>
</organism>
<dbReference type="EC" id="4.2.2.n1" evidence="1"/>
<dbReference type="EMBL" id="AE006468">
    <property type="protein sequence ID" value="AAL21461.1"/>
    <property type="molecule type" value="Genomic_DNA"/>
</dbReference>
<dbReference type="RefSeq" id="WP_000734248.1">
    <property type="nucleotide sequence ID" value="NC_003197.2"/>
</dbReference>
<dbReference type="SMR" id="Q8ZN28"/>
<dbReference type="STRING" id="99287.STM2567"/>
<dbReference type="CAZy" id="GH23">
    <property type="family name" value="Glycoside Hydrolase Family 23"/>
</dbReference>
<dbReference type="PaxDb" id="99287-STM2567"/>
<dbReference type="KEGG" id="stm:STM2567"/>
<dbReference type="PATRIC" id="fig|99287.12.peg.2708"/>
<dbReference type="HOGENOM" id="CLU_027494_0_1_6"/>
<dbReference type="PhylomeDB" id="Q8ZN28"/>
<dbReference type="BioCyc" id="SENT99287:STM2567-MONOMER"/>
<dbReference type="Proteomes" id="UP000001014">
    <property type="component" value="Chromosome"/>
</dbReference>
<dbReference type="GO" id="GO:0009279">
    <property type="term" value="C:cell outer membrane"/>
    <property type="evidence" value="ECO:0000318"/>
    <property type="project" value="GO_Central"/>
</dbReference>
<dbReference type="GO" id="GO:0008933">
    <property type="term" value="F:peptidoglycan lytic transglycosylase activity"/>
    <property type="evidence" value="ECO:0000318"/>
    <property type="project" value="GO_Central"/>
</dbReference>
<dbReference type="GO" id="GO:0016998">
    <property type="term" value="P:cell wall macromolecule catabolic process"/>
    <property type="evidence" value="ECO:0007669"/>
    <property type="project" value="UniProtKB-UniRule"/>
</dbReference>
<dbReference type="GO" id="GO:0071555">
    <property type="term" value="P:cell wall organization"/>
    <property type="evidence" value="ECO:0007669"/>
    <property type="project" value="UniProtKB-KW"/>
</dbReference>
<dbReference type="GO" id="GO:0009253">
    <property type="term" value="P:peptidoglycan catabolic process"/>
    <property type="evidence" value="ECO:0000318"/>
    <property type="project" value="GO_Central"/>
</dbReference>
<dbReference type="CDD" id="cd13403">
    <property type="entry name" value="MLTF-like"/>
    <property type="match status" value="1"/>
</dbReference>
<dbReference type="CDD" id="cd01009">
    <property type="entry name" value="PBP2_YfhD_N"/>
    <property type="match status" value="1"/>
</dbReference>
<dbReference type="FunFam" id="1.10.530.10:FF:000003">
    <property type="entry name" value="Membrane-bound lytic murein transglycosylase F"/>
    <property type="match status" value="1"/>
</dbReference>
<dbReference type="FunFam" id="3.40.190.10:FF:000051">
    <property type="entry name" value="Membrane-bound lytic murein transglycosylase F"/>
    <property type="match status" value="1"/>
</dbReference>
<dbReference type="Gene3D" id="1.10.530.10">
    <property type="match status" value="1"/>
</dbReference>
<dbReference type="Gene3D" id="3.40.190.10">
    <property type="entry name" value="Periplasmic binding protein-like II"/>
    <property type="match status" value="2"/>
</dbReference>
<dbReference type="HAMAP" id="MF_02016">
    <property type="entry name" value="MltF"/>
    <property type="match status" value="1"/>
</dbReference>
<dbReference type="InterPro" id="IPR023346">
    <property type="entry name" value="Lysozyme-like_dom_sf"/>
</dbReference>
<dbReference type="InterPro" id="IPR023703">
    <property type="entry name" value="MltF"/>
</dbReference>
<dbReference type="InterPro" id="IPR001638">
    <property type="entry name" value="Solute-binding_3/MltF_N"/>
</dbReference>
<dbReference type="InterPro" id="IPR000189">
    <property type="entry name" value="Transglyc_AS"/>
</dbReference>
<dbReference type="InterPro" id="IPR008258">
    <property type="entry name" value="Transglycosylase_SLT_dom_1"/>
</dbReference>
<dbReference type="NCBIfam" id="NF008112">
    <property type="entry name" value="PRK10859.1"/>
    <property type="match status" value="1"/>
</dbReference>
<dbReference type="PANTHER" id="PTHR35936">
    <property type="entry name" value="MEMBRANE-BOUND LYTIC MUREIN TRANSGLYCOSYLASE F"/>
    <property type="match status" value="1"/>
</dbReference>
<dbReference type="PANTHER" id="PTHR35936:SF32">
    <property type="entry name" value="MEMBRANE-BOUND LYTIC MUREIN TRANSGLYCOSYLASE F"/>
    <property type="match status" value="1"/>
</dbReference>
<dbReference type="Pfam" id="PF00497">
    <property type="entry name" value="SBP_bac_3"/>
    <property type="match status" value="1"/>
</dbReference>
<dbReference type="Pfam" id="PF01464">
    <property type="entry name" value="SLT"/>
    <property type="match status" value="1"/>
</dbReference>
<dbReference type="SMART" id="SM00062">
    <property type="entry name" value="PBPb"/>
    <property type="match status" value="1"/>
</dbReference>
<dbReference type="SUPFAM" id="SSF53955">
    <property type="entry name" value="Lysozyme-like"/>
    <property type="match status" value="1"/>
</dbReference>
<dbReference type="SUPFAM" id="SSF53850">
    <property type="entry name" value="Periplasmic binding protein-like II"/>
    <property type="match status" value="1"/>
</dbReference>
<dbReference type="PROSITE" id="PS00922">
    <property type="entry name" value="TRANSGLYCOSYLASE"/>
    <property type="match status" value="1"/>
</dbReference>
<sequence length="514" mass="58040">MKKLKINYLFIGILTLLLAAALWPSIPWFGKTENHIAAIQARGVLRVSTIDSPLTYSVINGKKYGLDYELAQQFANYLGVKLKVTVRQNISQLFDDLDNGNADLLAAGLVYDSARVKNYQPGPMYYSVSQQLVYRVGQYRPRSLATVNENQLTIAPGHVVVNDLQRLKETKFPDLSWKVDDKKGSTTLLEEVISGKLDYTIADSVAISLFQRVHPELAVALDVTDEQPVTWFSRLDDDNTLSAALLDFFNSINEDGSLARIEEKYLGHGDDFDYVDTRSFLRAVDNVLPELEPLFKKYAKEIDWRLLAAISYQESHWDPLATSPTGVRGLMMLTKNTAQSLGLTDRTDAEQSISGGARYLEDMMAKVPETVPEDERIWFALAAYNMGYAHMLDARSLTVKTKGNPDSWTDVKQRLPLLSQKPYYSKLTYGYARGHEAYAYVENIRKYQISLVGYLQEKEKQEAEAMKLAQDYPAVSPEELNKAPFPFLSFLSQSSGYLTHSPSLLFTPQKKEEK</sequence>
<accession>Q8ZN28</accession>
<feature type="signal peptide" evidence="1">
    <location>
        <begin position="1"/>
        <end position="30"/>
    </location>
</feature>
<feature type="chain" id="PRO_0000353975" description="Membrane-bound lytic murein transglycosylase F">
    <location>
        <begin position="31"/>
        <end position="514"/>
    </location>
</feature>
<feature type="region of interest" description="Non-LT domain" evidence="1">
    <location>
        <begin position="31"/>
        <end position="269"/>
    </location>
</feature>
<feature type="region of interest" description="LT domain" evidence="1">
    <location>
        <begin position="270"/>
        <end position="514"/>
    </location>
</feature>
<feature type="active site" evidence="1">
    <location>
        <position position="314"/>
    </location>
</feature>
<gene>
    <name evidence="1" type="primary">mltF</name>
    <name type="ordered locus">STM2567</name>
</gene>
<evidence type="ECO:0000255" key="1">
    <source>
        <dbReference type="HAMAP-Rule" id="MF_02016"/>
    </source>
</evidence>
<name>MLTF_SALTY</name>
<comment type="function">
    <text evidence="1">Murein-degrading enzyme that degrades murein glycan strands and insoluble, high-molecular weight murein sacculi, with the concomitant formation of a 1,6-anhydromuramoyl product. Lytic transglycosylases (LTs) play an integral role in the metabolism of the peptidoglycan (PG) sacculus. Their lytic action creates space within the PG sacculus to allow for its expansion as well as for the insertion of various structures such as secretion systems and flagella.</text>
</comment>
<comment type="catalytic activity">
    <reaction evidence="1">
        <text>Exolytic cleavage of the (1-&gt;4)-beta-glycosidic linkage between N-acetylmuramic acid (MurNAc) and N-acetylglucosamine (GlcNAc) residues in peptidoglycan, from either the reducing or the non-reducing ends of the peptidoglycan chains, with concomitant formation of a 1,6-anhydrobond in the MurNAc residue.</text>
        <dbReference type="EC" id="4.2.2.n1"/>
    </reaction>
</comment>
<comment type="subcellular location">
    <subcellularLocation>
        <location>Cell outer membrane</location>
        <topology>Peripheral membrane protein</topology>
    </subcellularLocation>
    <text evidence="1">Attached to the inner leaflet of the outer membrane.</text>
</comment>
<comment type="domain">
    <text evidence="1">The N-terminal domain does not have lytic activity and probably modulates enzymatic activity. The C-terminal domain is the catalytic active domain.</text>
</comment>
<comment type="similarity">
    <text evidence="1">In the N-terminal section; belongs to the bacterial solute-binding protein 3 family.</text>
</comment>
<comment type="similarity">
    <text evidence="1">In the C-terminal section; belongs to the transglycosylase Slt family.</text>
</comment>
<protein>
    <recommendedName>
        <fullName evidence="1">Membrane-bound lytic murein transglycosylase F</fullName>
        <ecNumber evidence="1">4.2.2.n1</ecNumber>
    </recommendedName>
    <alternativeName>
        <fullName evidence="1">Murein lyase F</fullName>
    </alternativeName>
</protein>
<keyword id="KW-0998">Cell outer membrane</keyword>
<keyword id="KW-0961">Cell wall biogenesis/degradation</keyword>
<keyword id="KW-0456">Lyase</keyword>
<keyword id="KW-0472">Membrane</keyword>
<keyword id="KW-1185">Reference proteome</keyword>
<keyword id="KW-0732">Signal</keyword>